<name>RPN2_CANGA</name>
<evidence type="ECO:0000250" key="1"/>
<evidence type="ECO:0000256" key="2">
    <source>
        <dbReference type="SAM" id="MobiDB-lite"/>
    </source>
</evidence>
<evidence type="ECO:0000305" key="3"/>
<protein>
    <recommendedName>
        <fullName>26S proteasome regulatory subunit RPN2</fullName>
    </recommendedName>
</protein>
<feature type="chain" id="PRO_0000173806" description="26S proteasome regulatory subunit RPN2">
    <location>
        <begin position="1"/>
        <end position="941"/>
    </location>
</feature>
<feature type="repeat" description="PC 1">
    <location>
        <begin position="363"/>
        <end position="396"/>
    </location>
</feature>
<feature type="repeat" description="PC 2">
    <location>
        <begin position="400"/>
        <end position="437"/>
    </location>
</feature>
<feature type="repeat" description="PC 3">
    <location>
        <begin position="442"/>
        <end position="476"/>
    </location>
</feature>
<feature type="repeat" description="PC 4">
    <location>
        <begin position="477"/>
        <end position="511"/>
    </location>
</feature>
<feature type="repeat" description="PC 5">
    <location>
        <begin position="513"/>
        <end position="546"/>
    </location>
</feature>
<feature type="repeat" description="PC 6">
    <location>
        <begin position="547"/>
        <end position="582"/>
    </location>
</feature>
<feature type="repeat" description="PC 7">
    <location>
        <begin position="583"/>
        <end position="615"/>
    </location>
</feature>
<feature type="repeat" description="PC 8">
    <location>
        <begin position="617"/>
        <end position="651"/>
    </location>
</feature>
<feature type="repeat" description="PC 9">
    <location>
        <begin position="652"/>
        <end position="689"/>
    </location>
</feature>
<feature type="repeat" description="PC 10">
    <location>
        <begin position="695"/>
        <end position="731"/>
    </location>
</feature>
<feature type="region of interest" description="Disordered" evidence="2">
    <location>
        <begin position="808"/>
        <end position="854"/>
    </location>
</feature>
<feature type="compositionally biased region" description="Basic and acidic residues" evidence="2">
    <location>
        <begin position="816"/>
        <end position="854"/>
    </location>
</feature>
<proteinExistence type="inferred from homology"/>
<comment type="function">
    <text evidence="1">Acts as a regulatory subunit of the 26S proteasome which is involved in the ATP-dependent degradation of ubiquitinated proteins.</text>
</comment>
<comment type="similarity">
    <text evidence="3">Belongs to the proteasome subunit S1 family.</text>
</comment>
<gene>
    <name type="primary">RPN2</name>
    <name type="ordered locus">CAGL0M12859g</name>
</gene>
<keyword id="KW-0647">Proteasome</keyword>
<keyword id="KW-1185">Reference proteome</keyword>
<keyword id="KW-0677">Repeat</keyword>
<accession>Q6FIP2</accession>
<organism>
    <name type="scientific">Candida glabrata (strain ATCC 2001 / BCRC 20586 / JCM 3761 / NBRC 0622 / NRRL Y-65 / CBS 138)</name>
    <name type="common">Yeast</name>
    <name type="synonym">Nakaseomyces glabratus</name>
    <dbReference type="NCBI Taxonomy" id="284593"/>
    <lineage>
        <taxon>Eukaryota</taxon>
        <taxon>Fungi</taxon>
        <taxon>Dikarya</taxon>
        <taxon>Ascomycota</taxon>
        <taxon>Saccharomycotina</taxon>
        <taxon>Saccharomycetes</taxon>
        <taxon>Saccharomycetales</taxon>
        <taxon>Saccharomycetaceae</taxon>
        <taxon>Nakaseomyces</taxon>
    </lineage>
</organism>
<reference key="1">
    <citation type="journal article" date="2004" name="Nature">
        <title>Genome evolution in yeasts.</title>
        <authorList>
            <person name="Dujon B."/>
            <person name="Sherman D."/>
            <person name="Fischer G."/>
            <person name="Durrens P."/>
            <person name="Casaregola S."/>
            <person name="Lafontaine I."/>
            <person name="de Montigny J."/>
            <person name="Marck C."/>
            <person name="Neuveglise C."/>
            <person name="Talla E."/>
            <person name="Goffard N."/>
            <person name="Frangeul L."/>
            <person name="Aigle M."/>
            <person name="Anthouard V."/>
            <person name="Babour A."/>
            <person name="Barbe V."/>
            <person name="Barnay S."/>
            <person name="Blanchin S."/>
            <person name="Beckerich J.-M."/>
            <person name="Beyne E."/>
            <person name="Bleykasten C."/>
            <person name="Boisrame A."/>
            <person name="Boyer J."/>
            <person name="Cattolico L."/>
            <person name="Confanioleri F."/>
            <person name="de Daruvar A."/>
            <person name="Despons L."/>
            <person name="Fabre E."/>
            <person name="Fairhead C."/>
            <person name="Ferry-Dumazet H."/>
            <person name="Groppi A."/>
            <person name="Hantraye F."/>
            <person name="Hennequin C."/>
            <person name="Jauniaux N."/>
            <person name="Joyet P."/>
            <person name="Kachouri R."/>
            <person name="Kerrest A."/>
            <person name="Koszul R."/>
            <person name="Lemaire M."/>
            <person name="Lesur I."/>
            <person name="Ma L."/>
            <person name="Muller H."/>
            <person name="Nicaud J.-M."/>
            <person name="Nikolski M."/>
            <person name="Oztas S."/>
            <person name="Ozier-Kalogeropoulos O."/>
            <person name="Pellenz S."/>
            <person name="Potier S."/>
            <person name="Richard G.-F."/>
            <person name="Straub M.-L."/>
            <person name="Suleau A."/>
            <person name="Swennen D."/>
            <person name="Tekaia F."/>
            <person name="Wesolowski-Louvel M."/>
            <person name="Westhof E."/>
            <person name="Wirth B."/>
            <person name="Zeniou-Meyer M."/>
            <person name="Zivanovic Y."/>
            <person name="Bolotin-Fukuhara M."/>
            <person name="Thierry A."/>
            <person name="Bouchier C."/>
            <person name="Caudron B."/>
            <person name="Scarpelli C."/>
            <person name="Gaillardin C."/>
            <person name="Weissenbach J."/>
            <person name="Wincker P."/>
            <person name="Souciet J.-L."/>
        </authorList>
    </citation>
    <scope>NUCLEOTIDE SEQUENCE [LARGE SCALE GENOMIC DNA]</scope>
    <source>
        <strain>ATCC 2001 / BCRC 20586 / JCM 3761 / NBRC 0622 / NRRL Y-65 / CBS 138</strain>
    </source>
</reference>
<dbReference type="EMBL" id="CR380959">
    <property type="protein sequence ID" value="CAG62882.1"/>
    <property type="molecule type" value="Genomic_DNA"/>
</dbReference>
<dbReference type="RefSeq" id="XP_449902.1">
    <property type="nucleotide sequence ID" value="XM_449902.1"/>
</dbReference>
<dbReference type="SMR" id="Q6FIP2"/>
<dbReference type="FunCoup" id="Q6FIP2">
    <property type="interactions" value="1541"/>
</dbReference>
<dbReference type="STRING" id="284593.Q6FIP2"/>
<dbReference type="EnsemblFungi" id="CAGL0M12859g-T">
    <property type="protein sequence ID" value="CAGL0M12859g-T-p1"/>
    <property type="gene ID" value="CAGL0M12859g"/>
</dbReference>
<dbReference type="KEGG" id="cgr:2891453"/>
<dbReference type="CGD" id="CAL0136353">
    <property type="gene designation" value="CAGL0M12859g"/>
</dbReference>
<dbReference type="VEuPathDB" id="FungiDB:CAGL0M12859g"/>
<dbReference type="eggNOG" id="KOG2062">
    <property type="taxonomic scope" value="Eukaryota"/>
</dbReference>
<dbReference type="HOGENOM" id="CLU_002323_0_0_1"/>
<dbReference type="InParanoid" id="Q6FIP2"/>
<dbReference type="OMA" id="IMFGRQE"/>
<dbReference type="Proteomes" id="UP000002428">
    <property type="component" value="Chromosome M"/>
</dbReference>
<dbReference type="GO" id="GO:0005634">
    <property type="term" value="C:nucleus"/>
    <property type="evidence" value="ECO:0007669"/>
    <property type="project" value="EnsemblFungi"/>
</dbReference>
<dbReference type="GO" id="GO:0008540">
    <property type="term" value="C:proteasome regulatory particle, base subcomplex"/>
    <property type="evidence" value="ECO:0007669"/>
    <property type="project" value="EnsemblFungi"/>
</dbReference>
<dbReference type="GO" id="GO:0034515">
    <property type="term" value="C:proteasome storage granule"/>
    <property type="evidence" value="ECO:0007669"/>
    <property type="project" value="EnsemblFungi"/>
</dbReference>
<dbReference type="GO" id="GO:0004175">
    <property type="term" value="F:endopeptidase activity"/>
    <property type="evidence" value="ECO:0007669"/>
    <property type="project" value="EnsemblFungi"/>
</dbReference>
<dbReference type="GO" id="GO:0030234">
    <property type="term" value="F:enzyme regulator activity"/>
    <property type="evidence" value="ECO:0007669"/>
    <property type="project" value="InterPro"/>
</dbReference>
<dbReference type="GO" id="GO:0031625">
    <property type="term" value="F:ubiquitin protein ligase binding"/>
    <property type="evidence" value="ECO:0007669"/>
    <property type="project" value="EnsemblFungi"/>
</dbReference>
<dbReference type="GO" id="GO:0043248">
    <property type="term" value="P:proteasome assembly"/>
    <property type="evidence" value="ECO:0007669"/>
    <property type="project" value="EnsemblFungi"/>
</dbReference>
<dbReference type="GO" id="GO:0043161">
    <property type="term" value="P:proteasome-mediated ubiquitin-dependent protein catabolic process"/>
    <property type="evidence" value="ECO:0007669"/>
    <property type="project" value="EnsemblFungi"/>
</dbReference>
<dbReference type="GO" id="GO:0042176">
    <property type="term" value="P:regulation of protein catabolic process"/>
    <property type="evidence" value="ECO:0007669"/>
    <property type="project" value="InterPro"/>
</dbReference>
<dbReference type="FunFam" id="1.25.10.10:FF:000017">
    <property type="entry name" value="26S proteasome non-ATPase regulatory subunit 1"/>
    <property type="match status" value="1"/>
</dbReference>
<dbReference type="Gene3D" id="1.25.10.10">
    <property type="entry name" value="Leucine-rich Repeat Variant"/>
    <property type="match status" value="1"/>
</dbReference>
<dbReference type="InterPro" id="IPR016642">
    <property type="entry name" value="26S_Psome_Rpn2"/>
</dbReference>
<dbReference type="InterPro" id="IPR011989">
    <property type="entry name" value="ARM-like"/>
</dbReference>
<dbReference type="InterPro" id="IPR016024">
    <property type="entry name" value="ARM-type_fold"/>
</dbReference>
<dbReference type="InterPro" id="IPR002015">
    <property type="entry name" value="Proteasome/cyclosome_rpt"/>
</dbReference>
<dbReference type="InterPro" id="IPR048570">
    <property type="entry name" value="PSMD1_RPN2_N"/>
</dbReference>
<dbReference type="InterPro" id="IPR040623">
    <property type="entry name" value="RPN2_C"/>
</dbReference>
<dbReference type="PANTHER" id="PTHR10943">
    <property type="entry name" value="26S PROTEASOME NON-ATPASE REGULATORY SUBUNIT"/>
    <property type="match status" value="1"/>
</dbReference>
<dbReference type="PANTHER" id="PTHR10943:SF2">
    <property type="entry name" value="26S PROTEASOME NON-ATPASE REGULATORY SUBUNIT 1"/>
    <property type="match status" value="1"/>
</dbReference>
<dbReference type="Pfam" id="PF13646">
    <property type="entry name" value="HEAT_2"/>
    <property type="match status" value="1"/>
</dbReference>
<dbReference type="Pfam" id="PF01851">
    <property type="entry name" value="PC_rep"/>
    <property type="match status" value="3"/>
</dbReference>
<dbReference type="Pfam" id="PF18004">
    <property type="entry name" value="RPN2_C"/>
    <property type="match status" value="1"/>
</dbReference>
<dbReference type="Pfam" id="PF21505">
    <property type="entry name" value="RPN2_N"/>
    <property type="match status" value="1"/>
</dbReference>
<dbReference type="PIRSF" id="PIRSF015947">
    <property type="entry name" value="26S_Psome_Rpn2"/>
    <property type="match status" value="1"/>
</dbReference>
<dbReference type="SUPFAM" id="SSF48371">
    <property type="entry name" value="ARM repeat"/>
    <property type="match status" value="1"/>
</dbReference>
<sequence>MSLTTAAPLLALLKEKDAEVKAYALQSINEGVDQFWSEVSNDLPEIEALYDDNGFQDRKMAALIASKVYYNLGEYESAVKYALAAEEKFDIDEKTQYVETIVSKSIEMYIKLATEIYNKSGEQVNLDPKLTIVFEKMMTKCTQANEYKLALGIALEAFRLDVVKSILQERLGEDQEGGSMKLMSYVLTAATTTVFNSKFKDEILRLLFDLLMPLKNADYFITSKVVVNLNDPELATQLFEKLHDEEQIEVSYQIAFDLVSSASQHLLEKLHHNLSERSYDSGLLEILTGIPTCDYYNTFLLNKKNIDISLLNKSKSSLDGKFSLFHTAVSVSNGYMHAGTTDNSFIKANLSWLGKAQNWAKFSATASLGVIHKGNLIDGKKVMAPYLPGSRSSSRFIKGGSLYGLGLIYAGFGRDIVDYLKTHLIENSGTTGDEDVDVLLHGASLGVGLAAMGTANNEVYEALKDVLYNDVATSGEAAAFGIGLTLLGTGDETAINDLFTYAQETSHGNITRGLSMALALINYGRQEQADELIDKMLASENSLIRYGGAFSIALAYVGTGNNKVVKKLLHLAVSDSNDDVRRAAVTALGFVLLRDYTTVPRIVQLLAESHNAHDRCGAAFALGIACAGKGLQAAIDVLEPMTKDPADFVRQAAMISLSLVMIQQTEKMNPKVASINSHFLSVITNKHQEGLAKFGACVALGIMNAGGRNVTIQLENAETGTLDTKSVVGLAMFTQFWYWFPMAHFLSLSFTPTTIVGVRGSDLNIPKFDMNCYAREDVFSYPKMFEESADKEVEKVATAILSTTARAKARAKKTKKEKDTNEDDKKKKEKDLKKEETKKDDAKKESEAEEDFNKNRYSSKPYKIENMSRVLPQQLKYVQFIKEERFTPVRKFKGTNGVVVLKDNKPSEPASIIETVRQSKDVNAPLPTPFKVTEELDFEKI</sequence>